<comment type="function">
    <text evidence="1">Endonuclease that specifically degrades the RNA of RNA-DNA hybrids.</text>
</comment>
<comment type="catalytic activity">
    <reaction evidence="1">
        <text>Endonucleolytic cleavage to 5'-phosphomonoester.</text>
        <dbReference type="EC" id="3.1.26.4"/>
    </reaction>
</comment>
<comment type="cofactor">
    <cofactor evidence="1">
        <name>Mg(2+)</name>
        <dbReference type="ChEBI" id="CHEBI:18420"/>
    </cofactor>
    <text evidence="1">Binds 1 Mg(2+) ion per subunit. May bind a second metal ion at a regulatory site, or after substrate binding.</text>
</comment>
<comment type="subunit">
    <text evidence="1">Monomer.</text>
</comment>
<comment type="subcellular location">
    <subcellularLocation>
        <location evidence="1">Cytoplasm</location>
    </subcellularLocation>
</comment>
<comment type="similarity">
    <text evidence="1">Belongs to the RNase H family.</text>
</comment>
<feature type="chain" id="PRO_1000090921" description="Ribonuclease H">
    <location>
        <begin position="1"/>
        <end position="155"/>
    </location>
</feature>
<feature type="domain" description="RNase H type-1" evidence="2">
    <location>
        <begin position="4"/>
        <end position="146"/>
    </location>
</feature>
<feature type="binding site" evidence="1">
    <location>
        <position position="13"/>
    </location>
    <ligand>
        <name>Mg(2+)</name>
        <dbReference type="ChEBI" id="CHEBI:18420"/>
        <label>1</label>
    </ligand>
</feature>
<feature type="binding site" evidence="1">
    <location>
        <position position="13"/>
    </location>
    <ligand>
        <name>Mg(2+)</name>
        <dbReference type="ChEBI" id="CHEBI:18420"/>
        <label>2</label>
    </ligand>
</feature>
<feature type="binding site" evidence="1">
    <location>
        <position position="51"/>
    </location>
    <ligand>
        <name>Mg(2+)</name>
        <dbReference type="ChEBI" id="CHEBI:18420"/>
        <label>1</label>
    </ligand>
</feature>
<feature type="binding site" evidence="1">
    <location>
        <position position="73"/>
    </location>
    <ligand>
        <name>Mg(2+)</name>
        <dbReference type="ChEBI" id="CHEBI:18420"/>
        <label>1</label>
    </ligand>
</feature>
<feature type="binding site" evidence="1">
    <location>
        <position position="138"/>
    </location>
    <ligand>
        <name>Mg(2+)</name>
        <dbReference type="ChEBI" id="CHEBI:18420"/>
        <label>2</label>
    </ligand>
</feature>
<organism>
    <name type="scientific">Thermoanaerobacter pseudethanolicus (strain ATCC 33223 / 39E)</name>
    <name type="common">Clostridium thermohydrosulfuricum</name>
    <dbReference type="NCBI Taxonomy" id="340099"/>
    <lineage>
        <taxon>Bacteria</taxon>
        <taxon>Bacillati</taxon>
        <taxon>Bacillota</taxon>
        <taxon>Clostridia</taxon>
        <taxon>Thermoanaerobacterales</taxon>
        <taxon>Thermoanaerobacteraceae</taxon>
        <taxon>Thermoanaerobacter</taxon>
    </lineage>
</organism>
<dbReference type="EC" id="3.1.26.4" evidence="1"/>
<dbReference type="EMBL" id="CP000924">
    <property type="protein sequence ID" value="ABY94833.1"/>
    <property type="molecule type" value="Genomic_DNA"/>
</dbReference>
<dbReference type="RefSeq" id="WP_009052378.1">
    <property type="nucleotide sequence ID" value="NC_010321.1"/>
</dbReference>
<dbReference type="SMR" id="B0K9M0"/>
<dbReference type="STRING" id="340099.Teth39_1179"/>
<dbReference type="KEGG" id="tpd:Teth39_1179"/>
<dbReference type="eggNOG" id="COG0328">
    <property type="taxonomic scope" value="Bacteria"/>
</dbReference>
<dbReference type="HOGENOM" id="CLU_030894_6_2_9"/>
<dbReference type="Proteomes" id="UP000002156">
    <property type="component" value="Chromosome"/>
</dbReference>
<dbReference type="GO" id="GO:0005737">
    <property type="term" value="C:cytoplasm"/>
    <property type="evidence" value="ECO:0007669"/>
    <property type="project" value="UniProtKB-SubCell"/>
</dbReference>
<dbReference type="GO" id="GO:0000287">
    <property type="term" value="F:magnesium ion binding"/>
    <property type="evidence" value="ECO:0007669"/>
    <property type="project" value="UniProtKB-UniRule"/>
</dbReference>
<dbReference type="GO" id="GO:0003676">
    <property type="term" value="F:nucleic acid binding"/>
    <property type="evidence" value="ECO:0007669"/>
    <property type="project" value="InterPro"/>
</dbReference>
<dbReference type="GO" id="GO:0004523">
    <property type="term" value="F:RNA-DNA hybrid ribonuclease activity"/>
    <property type="evidence" value="ECO:0007669"/>
    <property type="project" value="UniProtKB-UniRule"/>
</dbReference>
<dbReference type="GO" id="GO:0043137">
    <property type="term" value="P:DNA replication, removal of RNA primer"/>
    <property type="evidence" value="ECO:0007669"/>
    <property type="project" value="TreeGrafter"/>
</dbReference>
<dbReference type="CDD" id="cd09278">
    <property type="entry name" value="RNase_HI_prokaryote_like"/>
    <property type="match status" value="1"/>
</dbReference>
<dbReference type="FunFam" id="3.30.420.10:FF:000089">
    <property type="entry name" value="Ribonuclease H"/>
    <property type="match status" value="1"/>
</dbReference>
<dbReference type="Gene3D" id="3.30.420.10">
    <property type="entry name" value="Ribonuclease H-like superfamily/Ribonuclease H"/>
    <property type="match status" value="1"/>
</dbReference>
<dbReference type="HAMAP" id="MF_00042">
    <property type="entry name" value="RNase_H"/>
    <property type="match status" value="1"/>
</dbReference>
<dbReference type="InterPro" id="IPR050092">
    <property type="entry name" value="RNase_H"/>
</dbReference>
<dbReference type="InterPro" id="IPR012337">
    <property type="entry name" value="RNaseH-like_sf"/>
</dbReference>
<dbReference type="InterPro" id="IPR002156">
    <property type="entry name" value="RNaseH_domain"/>
</dbReference>
<dbReference type="InterPro" id="IPR036397">
    <property type="entry name" value="RNaseH_sf"/>
</dbReference>
<dbReference type="InterPro" id="IPR022892">
    <property type="entry name" value="RNaseHI"/>
</dbReference>
<dbReference type="NCBIfam" id="NF001236">
    <property type="entry name" value="PRK00203.1"/>
    <property type="match status" value="1"/>
</dbReference>
<dbReference type="PANTHER" id="PTHR10642">
    <property type="entry name" value="RIBONUCLEASE H1"/>
    <property type="match status" value="1"/>
</dbReference>
<dbReference type="PANTHER" id="PTHR10642:SF26">
    <property type="entry name" value="RIBONUCLEASE H1"/>
    <property type="match status" value="1"/>
</dbReference>
<dbReference type="Pfam" id="PF00075">
    <property type="entry name" value="RNase_H"/>
    <property type="match status" value="1"/>
</dbReference>
<dbReference type="SUPFAM" id="SSF53098">
    <property type="entry name" value="Ribonuclease H-like"/>
    <property type="match status" value="1"/>
</dbReference>
<dbReference type="PROSITE" id="PS50879">
    <property type="entry name" value="RNASE_H_1"/>
    <property type="match status" value="1"/>
</dbReference>
<reference key="1">
    <citation type="submission" date="2008-01" db="EMBL/GenBank/DDBJ databases">
        <title>Complete sequence of Thermoanaerobacter pseudethanolicus 39E.</title>
        <authorList>
            <person name="Copeland A."/>
            <person name="Lucas S."/>
            <person name="Lapidus A."/>
            <person name="Barry K."/>
            <person name="Glavina del Rio T."/>
            <person name="Dalin E."/>
            <person name="Tice H."/>
            <person name="Pitluck S."/>
            <person name="Bruce D."/>
            <person name="Goodwin L."/>
            <person name="Saunders E."/>
            <person name="Brettin T."/>
            <person name="Detter J.C."/>
            <person name="Han C."/>
            <person name="Schmutz J."/>
            <person name="Larimer F."/>
            <person name="Land M."/>
            <person name="Hauser L."/>
            <person name="Kyrpides N."/>
            <person name="Lykidis A."/>
            <person name="Hemme C."/>
            <person name="Fields M.W."/>
            <person name="He Z."/>
            <person name="Zhou J."/>
            <person name="Richardson P."/>
        </authorList>
    </citation>
    <scope>NUCLEOTIDE SEQUENCE [LARGE SCALE GENOMIC DNA]</scope>
    <source>
        <strain>ATCC 33223 / DSM 2355 / 39E</strain>
    </source>
</reference>
<protein>
    <recommendedName>
        <fullName evidence="1">Ribonuclease H</fullName>
        <shortName evidence="1">RNase H</shortName>
        <ecNumber evidence="1">3.1.26.4</ecNumber>
    </recommendedName>
</protein>
<name>RNH_THEP3</name>
<keyword id="KW-0963">Cytoplasm</keyword>
<keyword id="KW-0255">Endonuclease</keyword>
<keyword id="KW-0378">Hydrolase</keyword>
<keyword id="KW-0460">Magnesium</keyword>
<keyword id="KW-0479">Metal-binding</keyword>
<keyword id="KW-0540">Nuclease</keyword>
<keyword id="KW-1185">Reference proteome</keyword>
<proteinExistence type="inferred from homology"/>
<accession>B0K9M0</accession>
<sequence length="155" mass="17785">MSNNIDVVEIYTDGACSGNPGPGGWAAVLLYKGTKKEISGFEENTTNNRMELKAVIEGLKALKRPCKVNLYSDSSYVINAFKEGWLEKWQKNNWLKSDKTPVENQDLWKELLEISKNHQVNWIKVKGHADNEYNNLCDRLATEQIKRNTRQNPKE</sequence>
<gene>
    <name evidence="1" type="primary">rnhA</name>
    <name type="ordered locus">Teth39_1179</name>
</gene>
<evidence type="ECO:0000255" key="1">
    <source>
        <dbReference type="HAMAP-Rule" id="MF_00042"/>
    </source>
</evidence>
<evidence type="ECO:0000255" key="2">
    <source>
        <dbReference type="PROSITE-ProRule" id="PRU00408"/>
    </source>
</evidence>